<proteinExistence type="inferred from homology"/>
<sequence length="307" mass="35486">MNIILFTSLVAFFVFLLILKYWINFQKSKGIGKYIRKEGPSSHFQKSGTPVMGGIIFLIVSIPFLFFKETFFPSLSTILFGLLGLLDDFKLMVNKDYGIRPLRKIFLSFIITLLLYIFSFHDYKIYWGSKLIISSRIFYVILFFVVFIAVPNAINLTDGLDGLAGGTSLITLFFFLIYNFQFNNELTLEISLMITALIAFLWFNSHPAEIFMGDVGAFALGGFIASLSIINKVELLLVFLGGIFLIESLSVFIQVFFYKWKKRRVFLMSPLHHHFELKGWKETKVVWRFYIIHLIMMIGGIILWNLT</sequence>
<organism>
    <name type="scientific">Dictyoglomus turgidum (strain DSM 6724 / Z-1310)</name>
    <dbReference type="NCBI Taxonomy" id="515635"/>
    <lineage>
        <taxon>Bacteria</taxon>
        <taxon>Pseudomonadati</taxon>
        <taxon>Dictyoglomota</taxon>
        <taxon>Dictyoglomia</taxon>
        <taxon>Dictyoglomales</taxon>
        <taxon>Dictyoglomaceae</taxon>
        <taxon>Dictyoglomus</taxon>
    </lineage>
</organism>
<name>MRAY_DICTD</name>
<dbReference type="EC" id="2.7.8.13" evidence="1"/>
<dbReference type="EMBL" id="CP001251">
    <property type="protein sequence ID" value="ACK42528.1"/>
    <property type="molecule type" value="Genomic_DNA"/>
</dbReference>
<dbReference type="RefSeq" id="WP_012583610.1">
    <property type="nucleotide sequence ID" value="NC_011661.1"/>
</dbReference>
<dbReference type="RefSeq" id="YP_002353142.1">
    <property type="nucleotide sequence ID" value="NC_011661.1"/>
</dbReference>
<dbReference type="SMR" id="B8E328"/>
<dbReference type="FunCoup" id="B8E328">
    <property type="interactions" value="378"/>
</dbReference>
<dbReference type="STRING" id="515635.Dtur_1250"/>
<dbReference type="EnsemblBacteria" id="ACK42528">
    <property type="protein sequence ID" value="ACK42528"/>
    <property type="gene ID" value="Dtur_1250"/>
</dbReference>
<dbReference type="KEGG" id="dtu:Dtur_1250"/>
<dbReference type="PATRIC" id="fig|515635.4.peg.1290"/>
<dbReference type="eggNOG" id="COG0472">
    <property type="taxonomic scope" value="Bacteria"/>
</dbReference>
<dbReference type="HOGENOM" id="CLU_023982_0_0_0"/>
<dbReference type="InParanoid" id="B8E328"/>
<dbReference type="OrthoDB" id="9805475at2"/>
<dbReference type="UniPathway" id="UPA00219"/>
<dbReference type="Proteomes" id="UP000007719">
    <property type="component" value="Chromosome"/>
</dbReference>
<dbReference type="GO" id="GO:0005886">
    <property type="term" value="C:plasma membrane"/>
    <property type="evidence" value="ECO:0000318"/>
    <property type="project" value="GO_Central"/>
</dbReference>
<dbReference type="GO" id="GO:0046872">
    <property type="term" value="F:metal ion binding"/>
    <property type="evidence" value="ECO:0007669"/>
    <property type="project" value="UniProtKB-KW"/>
</dbReference>
<dbReference type="GO" id="GO:0008963">
    <property type="term" value="F:phospho-N-acetylmuramoyl-pentapeptide-transferase activity"/>
    <property type="evidence" value="ECO:0007669"/>
    <property type="project" value="UniProtKB-UniRule"/>
</dbReference>
<dbReference type="GO" id="GO:0016780">
    <property type="term" value="F:phosphotransferase activity, for other substituted phosphate groups"/>
    <property type="evidence" value="ECO:0000318"/>
    <property type="project" value="GO_Central"/>
</dbReference>
<dbReference type="GO" id="GO:0051992">
    <property type="term" value="F:UDP-N-acetylmuramoyl-L-alanyl-D-glutamyl-meso-2,6-diaminopimelyl-D-alanyl-D-alanine:undecaprenyl-phosphate transferase activity"/>
    <property type="evidence" value="ECO:0007669"/>
    <property type="project" value="RHEA"/>
</dbReference>
<dbReference type="GO" id="GO:0051301">
    <property type="term" value="P:cell division"/>
    <property type="evidence" value="ECO:0007669"/>
    <property type="project" value="UniProtKB-KW"/>
</dbReference>
<dbReference type="GO" id="GO:0044038">
    <property type="term" value="P:cell wall macromolecule biosynthetic process"/>
    <property type="evidence" value="ECO:0000318"/>
    <property type="project" value="GO_Central"/>
</dbReference>
<dbReference type="GO" id="GO:0071555">
    <property type="term" value="P:cell wall organization"/>
    <property type="evidence" value="ECO:0000318"/>
    <property type="project" value="GO_Central"/>
</dbReference>
<dbReference type="GO" id="GO:0009252">
    <property type="term" value="P:peptidoglycan biosynthetic process"/>
    <property type="evidence" value="ECO:0007669"/>
    <property type="project" value="UniProtKB-UniRule"/>
</dbReference>
<dbReference type="GO" id="GO:0008360">
    <property type="term" value="P:regulation of cell shape"/>
    <property type="evidence" value="ECO:0007669"/>
    <property type="project" value="UniProtKB-KW"/>
</dbReference>
<dbReference type="CDD" id="cd06852">
    <property type="entry name" value="GT_MraY"/>
    <property type="match status" value="1"/>
</dbReference>
<dbReference type="HAMAP" id="MF_00038">
    <property type="entry name" value="MraY"/>
    <property type="match status" value="1"/>
</dbReference>
<dbReference type="InterPro" id="IPR000715">
    <property type="entry name" value="Glycosyl_transferase_4"/>
</dbReference>
<dbReference type="InterPro" id="IPR003524">
    <property type="entry name" value="PNAcMuramoyl-5peptid_Trfase"/>
</dbReference>
<dbReference type="InterPro" id="IPR018480">
    <property type="entry name" value="PNAcMuramoyl-5peptid_Trfase_CS"/>
</dbReference>
<dbReference type="NCBIfam" id="TIGR00445">
    <property type="entry name" value="mraY"/>
    <property type="match status" value="1"/>
</dbReference>
<dbReference type="PANTHER" id="PTHR22926">
    <property type="entry name" value="PHOSPHO-N-ACETYLMURAMOYL-PENTAPEPTIDE-TRANSFERASE"/>
    <property type="match status" value="1"/>
</dbReference>
<dbReference type="PANTHER" id="PTHR22926:SF5">
    <property type="entry name" value="PHOSPHO-N-ACETYLMURAMOYL-PENTAPEPTIDE-TRANSFERASE HOMOLOG"/>
    <property type="match status" value="1"/>
</dbReference>
<dbReference type="Pfam" id="PF00953">
    <property type="entry name" value="Glycos_transf_4"/>
    <property type="match status" value="1"/>
</dbReference>
<dbReference type="PROSITE" id="PS01348">
    <property type="entry name" value="MRAY_2"/>
    <property type="match status" value="1"/>
</dbReference>
<evidence type="ECO:0000255" key="1">
    <source>
        <dbReference type="HAMAP-Rule" id="MF_00038"/>
    </source>
</evidence>
<protein>
    <recommendedName>
        <fullName evidence="1">Phospho-N-acetylmuramoyl-pentapeptide-transferase</fullName>
        <ecNumber evidence="1">2.7.8.13</ecNumber>
    </recommendedName>
    <alternativeName>
        <fullName evidence="1">UDP-MurNAc-pentapeptide phosphotransferase</fullName>
    </alternativeName>
</protein>
<keyword id="KW-0131">Cell cycle</keyword>
<keyword id="KW-0132">Cell division</keyword>
<keyword id="KW-0997">Cell inner membrane</keyword>
<keyword id="KW-1003">Cell membrane</keyword>
<keyword id="KW-0133">Cell shape</keyword>
<keyword id="KW-0961">Cell wall biogenesis/degradation</keyword>
<keyword id="KW-0460">Magnesium</keyword>
<keyword id="KW-0472">Membrane</keyword>
<keyword id="KW-0479">Metal-binding</keyword>
<keyword id="KW-0573">Peptidoglycan synthesis</keyword>
<keyword id="KW-1185">Reference proteome</keyword>
<keyword id="KW-0808">Transferase</keyword>
<keyword id="KW-0812">Transmembrane</keyword>
<keyword id="KW-1133">Transmembrane helix</keyword>
<feature type="chain" id="PRO_1000116511" description="Phospho-N-acetylmuramoyl-pentapeptide-transferase">
    <location>
        <begin position="1"/>
        <end position="307"/>
    </location>
</feature>
<feature type="transmembrane region" description="Helical" evidence="1">
    <location>
        <begin position="3"/>
        <end position="23"/>
    </location>
</feature>
<feature type="transmembrane region" description="Helical" evidence="1">
    <location>
        <begin position="47"/>
        <end position="67"/>
    </location>
</feature>
<feature type="transmembrane region" description="Helical" evidence="1">
    <location>
        <begin position="71"/>
        <end position="91"/>
    </location>
</feature>
<feature type="transmembrane region" description="Helical" evidence="1">
    <location>
        <begin position="105"/>
        <end position="125"/>
    </location>
</feature>
<feature type="transmembrane region" description="Helical" evidence="1">
    <location>
        <begin position="137"/>
        <end position="157"/>
    </location>
</feature>
<feature type="transmembrane region" description="Helical" evidence="1">
    <location>
        <begin position="162"/>
        <end position="182"/>
    </location>
</feature>
<feature type="transmembrane region" description="Helical" evidence="1">
    <location>
        <begin position="186"/>
        <end position="206"/>
    </location>
</feature>
<feature type="transmembrane region" description="Helical" evidence="1">
    <location>
        <begin position="210"/>
        <end position="230"/>
    </location>
</feature>
<feature type="transmembrane region" description="Helical" evidence="1">
    <location>
        <begin position="237"/>
        <end position="257"/>
    </location>
</feature>
<feature type="transmembrane region" description="Helical" evidence="1">
    <location>
        <begin position="285"/>
        <end position="305"/>
    </location>
</feature>
<gene>
    <name evidence="1" type="primary">mraY</name>
    <name type="ordered locus">Dtur_1250</name>
</gene>
<comment type="function">
    <text evidence="1">Catalyzes the initial step of the lipid cycle reactions in the biosynthesis of the cell wall peptidoglycan: transfers peptidoglycan precursor phospho-MurNAc-pentapeptide from UDP-MurNAc-pentapeptide onto the lipid carrier undecaprenyl phosphate, yielding undecaprenyl-pyrophosphoryl-MurNAc-pentapeptide, known as lipid I.</text>
</comment>
<comment type="catalytic activity">
    <reaction evidence="1">
        <text>UDP-N-acetyl-alpha-D-muramoyl-L-alanyl-gamma-D-glutamyl-meso-2,6-diaminopimeloyl-D-alanyl-D-alanine + di-trans,octa-cis-undecaprenyl phosphate = di-trans,octa-cis-undecaprenyl diphospho-N-acetyl-alpha-D-muramoyl-L-alanyl-D-glutamyl-meso-2,6-diaminopimeloyl-D-alanyl-D-alanine + UMP</text>
        <dbReference type="Rhea" id="RHEA:28386"/>
        <dbReference type="ChEBI" id="CHEBI:57865"/>
        <dbReference type="ChEBI" id="CHEBI:60392"/>
        <dbReference type="ChEBI" id="CHEBI:61386"/>
        <dbReference type="ChEBI" id="CHEBI:61387"/>
        <dbReference type="EC" id="2.7.8.13"/>
    </reaction>
</comment>
<comment type="cofactor">
    <cofactor evidence="1">
        <name>Mg(2+)</name>
        <dbReference type="ChEBI" id="CHEBI:18420"/>
    </cofactor>
</comment>
<comment type="pathway">
    <text evidence="1">Cell wall biogenesis; peptidoglycan biosynthesis.</text>
</comment>
<comment type="subcellular location">
    <subcellularLocation>
        <location evidence="1">Cell inner membrane</location>
        <topology evidence="1">Multi-pass membrane protein</topology>
    </subcellularLocation>
</comment>
<comment type="similarity">
    <text evidence="1">Belongs to the glycosyltransferase 4 family. MraY subfamily.</text>
</comment>
<accession>B8E328</accession>
<reference key="1">
    <citation type="journal article" date="2016" name="Front. Microbiol.">
        <title>The complete genome sequence of hyperthermophile Dictyoglomus turgidum DSM 6724 reveals a specialized carbohydrate fermentor.</title>
        <authorList>
            <person name="Brumm P.J."/>
            <person name="Gowda K."/>
            <person name="Robb F.T."/>
            <person name="Mead D.A."/>
        </authorList>
    </citation>
    <scope>NUCLEOTIDE SEQUENCE [LARGE SCALE GENOMIC DNA]</scope>
    <source>
        <strain>DSM 6724 / Z-1310</strain>
    </source>
</reference>